<feature type="chain" id="PRO_1000070073" description="Membrane protein insertase YidC">
    <location>
        <begin position="1"/>
        <end position="558"/>
    </location>
</feature>
<feature type="transmembrane region" description="Helical" evidence="1">
    <location>
        <begin position="3"/>
        <end position="23"/>
    </location>
</feature>
<feature type="transmembrane region" description="Helical" evidence="1">
    <location>
        <begin position="364"/>
        <end position="384"/>
    </location>
</feature>
<feature type="transmembrane region" description="Helical" evidence="1">
    <location>
        <begin position="438"/>
        <end position="458"/>
    </location>
</feature>
<feature type="transmembrane region" description="Helical" evidence="1">
    <location>
        <begin position="477"/>
        <end position="497"/>
    </location>
</feature>
<feature type="transmembrane region" description="Helical" evidence="1">
    <location>
        <begin position="508"/>
        <end position="528"/>
    </location>
</feature>
<name>YIDC_BURP6</name>
<accession>A3N477</accession>
<organism>
    <name type="scientific">Burkholderia pseudomallei (strain 668)</name>
    <dbReference type="NCBI Taxonomy" id="320373"/>
    <lineage>
        <taxon>Bacteria</taxon>
        <taxon>Pseudomonadati</taxon>
        <taxon>Pseudomonadota</taxon>
        <taxon>Betaproteobacteria</taxon>
        <taxon>Burkholderiales</taxon>
        <taxon>Burkholderiaceae</taxon>
        <taxon>Burkholderia</taxon>
        <taxon>pseudomallei group</taxon>
    </lineage>
</organism>
<proteinExistence type="inferred from homology"/>
<gene>
    <name evidence="1" type="primary">yidC</name>
    <name type="ordered locus">BURPS668_0093</name>
</gene>
<keyword id="KW-0997">Cell inner membrane</keyword>
<keyword id="KW-1003">Cell membrane</keyword>
<keyword id="KW-0143">Chaperone</keyword>
<keyword id="KW-0472">Membrane</keyword>
<keyword id="KW-0653">Protein transport</keyword>
<keyword id="KW-0812">Transmembrane</keyword>
<keyword id="KW-1133">Transmembrane helix</keyword>
<keyword id="KW-0813">Transport</keyword>
<comment type="function">
    <text evidence="1">Required for the insertion and/or proper folding and/or complex formation of integral membrane proteins into the membrane. Involved in integration of membrane proteins that insert both dependently and independently of the Sec translocase complex, as well as at least some lipoproteins. Aids folding of multispanning membrane proteins.</text>
</comment>
<comment type="subunit">
    <text evidence="1">Interacts with the Sec translocase complex via SecD. Specifically interacts with transmembrane segments of nascent integral membrane proteins during membrane integration.</text>
</comment>
<comment type="subcellular location">
    <subcellularLocation>
        <location evidence="1">Cell inner membrane</location>
        <topology evidence="1">Multi-pass membrane protein</topology>
    </subcellularLocation>
</comment>
<comment type="similarity">
    <text evidence="1">Belongs to the OXA1/ALB3/YidC family. Type 1 subfamily.</text>
</comment>
<sequence length="558" mass="61160">MDIKRTVLWVIFFMSAVMLFDNWQRSHGRPSMFFPNVTQTNTASNATNGNGASGANAAAAANALPAAATGAAPATTAPAAQAQLVRFSTDVYNGEIDTRGGTLAKLTLTKAGDGKQPDLSVTLFDHTANHTYLARTGLLGGDFPNHNDVYAQVAGPTSLAADQNTLKLSFESPVKGGVKVVKTYTFTRGSYVIGVDTKIENVGAAPVTPSVYMELVRDNSSVETPMFSHTFLGPAVYTDQKHFQKITFGDIDKNKADYVTSADNGWIAMVQHYFASAWIPQSGAKRDIYVEKIDPTLYRVGVKQPVAAIAPGQSADVSARLFAGPEEERMLEGIAPGLELVKDYGWVTIIAKPLFWLLEKIHGFVGNWGWAIVLLTLLIKAVFFPLSAASYKSMARMKEITPRMQALRERFKSDPQKMNAALMELYKTEKVNPFGGCLPVVIQIPVFISLYWVLLASVEMRGAPWVLWIHDLSQRDPYFILPVLMAVSMFVQTKLNPTPPDPVQAKMMMFMPIAFSVMFFFFPAGLVLYYVVNNVLSIAQQYYITRTLGGAAAKKKAS</sequence>
<protein>
    <recommendedName>
        <fullName evidence="1">Membrane protein insertase YidC</fullName>
    </recommendedName>
    <alternativeName>
        <fullName evidence="1">Foldase YidC</fullName>
    </alternativeName>
    <alternativeName>
        <fullName evidence="1">Membrane integrase YidC</fullName>
    </alternativeName>
    <alternativeName>
        <fullName evidence="1">Membrane protein YidC</fullName>
    </alternativeName>
</protein>
<reference key="1">
    <citation type="journal article" date="2010" name="Genome Biol. Evol.">
        <title>Continuing evolution of Burkholderia mallei through genome reduction and large-scale rearrangements.</title>
        <authorList>
            <person name="Losada L."/>
            <person name="Ronning C.M."/>
            <person name="DeShazer D."/>
            <person name="Woods D."/>
            <person name="Fedorova N."/>
            <person name="Kim H.S."/>
            <person name="Shabalina S.A."/>
            <person name="Pearson T.R."/>
            <person name="Brinkac L."/>
            <person name="Tan P."/>
            <person name="Nandi T."/>
            <person name="Crabtree J."/>
            <person name="Badger J."/>
            <person name="Beckstrom-Sternberg S."/>
            <person name="Saqib M."/>
            <person name="Schutzer S.E."/>
            <person name="Keim P."/>
            <person name="Nierman W.C."/>
        </authorList>
    </citation>
    <scope>NUCLEOTIDE SEQUENCE [LARGE SCALE GENOMIC DNA]</scope>
    <source>
        <strain>668</strain>
    </source>
</reference>
<dbReference type="EMBL" id="CP000570">
    <property type="protein sequence ID" value="ABN82632.1"/>
    <property type="molecule type" value="Genomic_DNA"/>
</dbReference>
<dbReference type="RefSeq" id="WP_011850880.1">
    <property type="nucleotide sequence ID" value="NC_009074.1"/>
</dbReference>
<dbReference type="SMR" id="A3N477"/>
<dbReference type="KEGG" id="bpd:BURPS668_0093"/>
<dbReference type="HOGENOM" id="CLU_016535_3_0_4"/>
<dbReference type="GO" id="GO:0005886">
    <property type="term" value="C:plasma membrane"/>
    <property type="evidence" value="ECO:0007669"/>
    <property type="project" value="UniProtKB-SubCell"/>
</dbReference>
<dbReference type="GO" id="GO:0032977">
    <property type="term" value="F:membrane insertase activity"/>
    <property type="evidence" value="ECO:0007669"/>
    <property type="project" value="InterPro"/>
</dbReference>
<dbReference type="GO" id="GO:0051205">
    <property type="term" value="P:protein insertion into membrane"/>
    <property type="evidence" value="ECO:0007669"/>
    <property type="project" value="TreeGrafter"/>
</dbReference>
<dbReference type="GO" id="GO:0015031">
    <property type="term" value="P:protein transport"/>
    <property type="evidence" value="ECO:0007669"/>
    <property type="project" value="UniProtKB-KW"/>
</dbReference>
<dbReference type="CDD" id="cd20070">
    <property type="entry name" value="5TM_YidC_Alb3"/>
    <property type="match status" value="1"/>
</dbReference>
<dbReference type="CDD" id="cd19961">
    <property type="entry name" value="EcYidC-like_peri"/>
    <property type="match status" value="1"/>
</dbReference>
<dbReference type="Gene3D" id="2.70.98.90">
    <property type="match status" value="1"/>
</dbReference>
<dbReference type="HAMAP" id="MF_01810">
    <property type="entry name" value="YidC_type1"/>
    <property type="match status" value="1"/>
</dbReference>
<dbReference type="InterPro" id="IPR019998">
    <property type="entry name" value="Membr_insert_YidC"/>
</dbReference>
<dbReference type="InterPro" id="IPR028053">
    <property type="entry name" value="Membr_insert_YidC_N"/>
</dbReference>
<dbReference type="InterPro" id="IPR001708">
    <property type="entry name" value="YidC/ALB3/OXA1/COX18"/>
</dbReference>
<dbReference type="InterPro" id="IPR028055">
    <property type="entry name" value="YidC/Oxa/ALB_C"/>
</dbReference>
<dbReference type="InterPro" id="IPR047196">
    <property type="entry name" value="YidC_ALB_C"/>
</dbReference>
<dbReference type="InterPro" id="IPR038221">
    <property type="entry name" value="YidC_periplasmic_sf"/>
</dbReference>
<dbReference type="NCBIfam" id="NF002352">
    <property type="entry name" value="PRK01318.1-3"/>
    <property type="match status" value="1"/>
</dbReference>
<dbReference type="NCBIfam" id="TIGR03593">
    <property type="entry name" value="yidC_nterm"/>
    <property type="match status" value="1"/>
</dbReference>
<dbReference type="NCBIfam" id="TIGR03592">
    <property type="entry name" value="yidC_oxa1_cterm"/>
    <property type="match status" value="1"/>
</dbReference>
<dbReference type="PANTHER" id="PTHR12428:SF65">
    <property type="entry name" value="CYTOCHROME C OXIDASE ASSEMBLY PROTEIN COX18, MITOCHONDRIAL"/>
    <property type="match status" value="1"/>
</dbReference>
<dbReference type="PANTHER" id="PTHR12428">
    <property type="entry name" value="OXA1"/>
    <property type="match status" value="1"/>
</dbReference>
<dbReference type="Pfam" id="PF02096">
    <property type="entry name" value="60KD_IMP"/>
    <property type="match status" value="1"/>
</dbReference>
<dbReference type="Pfam" id="PF14849">
    <property type="entry name" value="YidC_periplas"/>
    <property type="match status" value="1"/>
</dbReference>
<dbReference type="PRINTS" id="PR00701">
    <property type="entry name" value="60KDINNERMP"/>
</dbReference>
<dbReference type="PRINTS" id="PR01900">
    <property type="entry name" value="YIDCPROTEIN"/>
</dbReference>
<evidence type="ECO:0000255" key="1">
    <source>
        <dbReference type="HAMAP-Rule" id="MF_01810"/>
    </source>
</evidence>